<reference key="1">
    <citation type="journal article" date="2003" name="Nature">
        <title>Genome divergence in two Prochlorococcus ecotypes reflects oceanic niche differentiation.</title>
        <authorList>
            <person name="Rocap G."/>
            <person name="Larimer F.W."/>
            <person name="Lamerdin J.E."/>
            <person name="Malfatti S."/>
            <person name="Chain P."/>
            <person name="Ahlgren N.A."/>
            <person name="Arellano A."/>
            <person name="Coleman M."/>
            <person name="Hauser L."/>
            <person name="Hess W.R."/>
            <person name="Johnson Z.I."/>
            <person name="Land M.L."/>
            <person name="Lindell D."/>
            <person name="Post A.F."/>
            <person name="Regala W."/>
            <person name="Shah M."/>
            <person name="Shaw S.L."/>
            <person name="Steglich C."/>
            <person name="Sullivan M.B."/>
            <person name="Ting C.S."/>
            <person name="Tolonen A."/>
            <person name="Webb E.A."/>
            <person name="Zinser E.R."/>
            <person name="Chisholm S.W."/>
        </authorList>
    </citation>
    <scope>NUCLEOTIDE SEQUENCE [LARGE SCALE GENOMIC DNA]</scope>
    <source>
        <strain>CCMP1986 / NIES-2087 / MED4</strain>
    </source>
</reference>
<name>DER_PROMP</name>
<sequence length="458" mass="51201">MTLPSIAIIGRPNVGKSTLVNRLCQSNDAIVFDKPGVTRDRTYQNASWAGREFQVVDTGGLVFEDDSEFLPEIRTQVFLALEEASLALFVVDGNQGVTDGDLSIAKWLRNSACKTIVAVNKCESTSLGVSLASEFWKLGLGEPYPVSAIHGSGTGDLLDLVIDGFPKDLNVEDKEDKIMMSIIGRPNVGKSSLLNAICGEKRAIVSDISGTTTDSIDTLIKKDSHLWKIVDTAGIRRKKNVKYGTEFFGINRAFKSIDRSDVCVLVIDAIDGVTDQDQKLAGRIEEQGRACVIVVNKWDLVEKNNSTIYQVEKELRSKLYFLHWSKMIFISALTGQRVQNIFEHALSAVTQHRRRVTTSVVNEVLKEALGWKSPPTKRSGKQGRLYYGTQVKNQPPTFTLFVNDPKLFGITYRRYIEKQIRLNLGFEGSPIILLWRGKQQRDLEKETSKKNINIIQKD</sequence>
<organism>
    <name type="scientific">Prochlorococcus marinus subsp. pastoris (strain CCMP1986 / NIES-2087 / MED4)</name>
    <dbReference type="NCBI Taxonomy" id="59919"/>
    <lineage>
        <taxon>Bacteria</taxon>
        <taxon>Bacillati</taxon>
        <taxon>Cyanobacteriota</taxon>
        <taxon>Cyanophyceae</taxon>
        <taxon>Synechococcales</taxon>
        <taxon>Prochlorococcaceae</taxon>
        <taxon>Prochlorococcus</taxon>
    </lineage>
</organism>
<proteinExistence type="inferred from homology"/>
<evidence type="ECO:0000255" key="1">
    <source>
        <dbReference type="HAMAP-Rule" id="MF_00195"/>
    </source>
</evidence>
<feature type="chain" id="PRO_0000179029" description="GTPase Der">
    <location>
        <begin position="1"/>
        <end position="458"/>
    </location>
</feature>
<feature type="domain" description="EngA-type G 1">
    <location>
        <begin position="4"/>
        <end position="169"/>
    </location>
</feature>
<feature type="domain" description="EngA-type G 2">
    <location>
        <begin position="178"/>
        <end position="353"/>
    </location>
</feature>
<feature type="domain" description="KH-like" evidence="1">
    <location>
        <begin position="354"/>
        <end position="439"/>
    </location>
</feature>
<feature type="binding site" evidence="1">
    <location>
        <begin position="10"/>
        <end position="17"/>
    </location>
    <ligand>
        <name>GTP</name>
        <dbReference type="ChEBI" id="CHEBI:37565"/>
        <label>1</label>
    </ligand>
</feature>
<feature type="binding site" evidence="1">
    <location>
        <begin position="57"/>
        <end position="61"/>
    </location>
    <ligand>
        <name>GTP</name>
        <dbReference type="ChEBI" id="CHEBI:37565"/>
        <label>1</label>
    </ligand>
</feature>
<feature type="binding site" evidence="1">
    <location>
        <begin position="120"/>
        <end position="123"/>
    </location>
    <ligand>
        <name>GTP</name>
        <dbReference type="ChEBI" id="CHEBI:37565"/>
        <label>1</label>
    </ligand>
</feature>
<feature type="binding site" evidence="1">
    <location>
        <begin position="184"/>
        <end position="191"/>
    </location>
    <ligand>
        <name>GTP</name>
        <dbReference type="ChEBI" id="CHEBI:37565"/>
        <label>2</label>
    </ligand>
</feature>
<feature type="binding site" evidence="1">
    <location>
        <begin position="231"/>
        <end position="235"/>
    </location>
    <ligand>
        <name>GTP</name>
        <dbReference type="ChEBI" id="CHEBI:37565"/>
        <label>2</label>
    </ligand>
</feature>
<feature type="binding site" evidence="1">
    <location>
        <begin position="296"/>
        <end position="299"/>
    </location>
    <ligand>
        <name>GTP</name>
        <dbReference type="ChEBI" id="CHEBI:37565"/>
        <label>2</label>
    </ligand>
</feature>
<dbReference type="EMBL" id="BX548174">
    <property type="protein sequence ID" value="CAE18850.1"/>
    <property type="molecule type" value="Genomic_DNA"/>
</dbReference>
<dbReference type="RefSeq" id="WP_011132027.1">
    <property type="nucleotide sequence ID" value="NC_005072.1"/>
</dbReference>
<dbReference type="SMR" id="Q7V2S6"/>
<dbReference type="STRING" id="59919.PMM0391"/>
<dbReference type="KEGG" id="pmm:PMM0391"/>
<dbReference type="eggNOG" id="COG1160">
    <property type="taxonomic scope" value="Bacteria"/>
</dbReference>
<dbReference type="HOGENOM" id="CLU_016077_6_2_3"/>
<dbReference type="OrthoDB" id="9805918at2"/>
<dbReference type="Proteomes" id="UP000001026">
    <property type="component" value="Chromosome"/>
</dbReference>
<dbReference type="GO" id="GO:0005525">
    <property type="term" value="F:GTP binding"/>
    <property type="evidence" value="ECO:0007669"/>
    <property type="project" value="UniProtKB-UniRule"/>
</dbReference>
<dbReference type="GO" id="GO:0043022">
    <property type="term" value="F:ribosome binding"/>
    <property type="evidence" value="ECO:0007669"/>
    <property type="project" value="TreeGrafter"/>
</dbReference>
<dbReference type="GO" id="GO:0042254">
    <property type="term" value="P:ribosome biogenesis"/>
    <property type="evidence" value="ECO:0007669"/>
    <property type="project" value="UniProtKB-KW"/>
</dbReference>
<dbReference type="CDD" id="cd01894">
    <property type="entry name" value="EngA1"/>
    <property type="match status" value="1"/>
</dbReference>
<dbReference type="CDD" id="cd01895">
    <property type="entry name" value="EngA2"/>
    <property type="match status" value="1"/>
</dbReference>
<dbReference type="FunFam" id="3.30.300.20:FF:000004">
    <property type="entry name" value="GTPase Der"/>
    <property type="match status" value="1"/>
</dbReference>
<dbReference type="FunFam" id="3.40.50.300:FF:000040">
    <property type="entry name" value="GTPase Der"/>
    <property type="match status" value="1"/>
</dbReference>
<dbReference type="FunFam" id="3.40.50.300:FF:000057">
    <property type="entry name" value="GTPase Der"/>
    <property type="match status" value="1"/>
</dbReference>
<dbReference type="Gene3D" id="3.30.300.20">
    <property type="match status" value="1"/>
</dbReference>
<dbReference type="Gene3D" id="3.40.50.300">
    <property type="entry name" value="P-loop containing nucleotide triphosphate hydrolases"/>
    <property type="match status" value="2"/>
</dbReference>
<dbReference type="HAMAP" id="MF_00195">
    <property type="entry name" value="GTPase_Der"/>
    <property type="match status" value="1"/>
</dbReference>
<dbReference type="InterPro" id="IPR031166">
    <property type="entry name" value="G_ENGA"/>
</dbReference>
<dbReference type="InterPro" id="IPR006073">
    <property type="entry name" value="GTP-bd"/>
</dbReference>
<dbReference type="InterPro" id="IPR016484">
    <property type="entry name" value="GTPase_Der"/>
</dbReference>
<dbReference type="InterPro" id="IPR032859">
    <property type="entry name" value="KH_dom-like"/>
</dbReference>
<dbReference type="InterPro" id="IPR015946">
    <property type="entry name" value="KH_dom-like_a/b"/>
</dbReference>
<dbReference type="InterPro" id="IPR027417">
    <property type="entry name" value="P-loop_NTPase"/>
</dbReference>
<dbReference type="InterPro" id="IPR005225">
    <property type="entry name" value="Small_GTP-bd"/>
</dbReference>
<dbReference type="NCBIfam" id="TIGR03594">
    <property type="entry name" value="GTPase_EngA"/>
    <property type="match status" value="1"/>
</dbReference>
<dbReference type="NCBIfam" id="TIGR00231">
    <property type="entry name" value="small_GTP"/>
    <property type="match status" value="2"/>
</dbReference>
<dbReference type="PANTHER" id="PTHR43834">
    <property type="entry name" value="GTPASE DER"/>
    <property type="match status" value="1"/>
</dbReference>
<dbReference type="PANTHER" id="PTHR43834:SF6">
    <property type="entry name" value="GTPASE DER"/>
    <property type="match status" value="1"/>
</dbReference>
<dbReference type="Pfam" id="PF14714">
    <property type="entry name" value="KH_dom-like"/>
    <property type="match status" value="1"/>
</dbReference>
<dbReference type="Pfam" id="PF01926">
    <property type="entry name" value="MMR_HSR1"/>
    <property type="match status" value="2"/>
</dbReference>
<dbReference type="PIRSF" id="PIRSF006485">
    <property type="entry name" value="GTP-binding_EngA"/>
    <property type="match status" value="1"/>
</dbReference>
<dbReference type="PRINTS" id="PR00326">
    <property type="entry name" value="GTP1OBG"/>
</dbReference>
<dbReference type="SUPFAM" id="SSF52540">
    <property type="entry name" value="P-loop containing nucleoside triphosphate hydrolases"/>
    <property type="match status" value="2"/>
</dbReference>
<dbReference type="PROSITE" id="PS51712">
    <property type="entry name" value="G_ENGA"/>
    <property type="match status" value="2"/>
</dbReference>
<accession>Q7V2S6</accession>
<comment type="function">
    <text evidence="1">GTPase that plays an essential role in the late steps of ribosome biogenesis.</text>
</comment>
<comment type="subunit">
    <text evidence="1">Associates with the 50S ribosomal subunit.</text>
</comment>
<comment type="similarity">
    <text evidence="1">Belongs to the TRAFAC class TrmE-Era-EngA-EngB-Septin-like GTPase superfamily. EngA (Der) GTPase family.</text>
</comment>
<keyword id="KW-0342">GTP-binding</keyword>
<keyword id="KW-0547">Nucleotide-binding</keyword>
<keyword id="KW-0677">Repeat</keyword>
<keyword id="KW-0690">Ribosome biogenesis</keyword>
<protein>
    <recommendedName>
        <fullName evidence="1">GTPase Der</fullName>
    </recommendedName>
    <alternativeName>
        <fullName evidence="1">GTP-binding protein EngA</fullName>
    </alternativeName>
</protein>
<gene>
    <name evidence="1" type="primary">der</name>
    <name type="synonym">engA</name>
    <name type="ordered locus">PMM0391</name>
</gene>